<protein>
    <recommendedName>
        <fullName>Uncharacterized protein YdiH</fullName>
    </recommendedName>
</protein>
<keyword id="KW-1185">Reference proteome</keyword>
<feature type="chain" id="PRO_0000168993" description="Uncharacterized protein YdiH">
    <location>
        <begin position="1"/>
        <end position="62"/>
    </location>
</feature>
<gene>
    <name type="primary">ydiH</name>
    <name type="ordered locus">SF1715</name>
    <name type="ordered locus">S1847</name>
</gene>
<comment type="sequence caution" evidence="1">
    <conflict type="erroneous initiation">
        <sequence resource="EMBL-CDS" id="AAN43291"/>
    </conflict>
</comment>
<comment type="sequence caution" evidence="1">
    <conflict type="erroneous initiation">
        <sequence resource="EMBL-CDS" id="AAP17179"/>
    </conflict>
</comment>
<proteinExistence type="predicted"/>
<name>YDIH_SHIFL</name>
<reference key="1">
    <citation type="journal article" date="2002" name="Nucleic Acids Res.">
        <title>Genome sequence of Shigella flexneri 2a: insights into pathogenicity through comparison with genomes of Escherichia coli K12 and O157.</title>
        <authorList>
            <person name="Jin Q."/>
            <person name="Yuan Z."/>
            <person name="Xu J."/>
            <person name="Wang Y."/>
            <person name="Shen Y."/>
            <person name="Lu W."/>
            <person name="Wang J."/>
            <person name="Liu H."/>
            <person name="Yang J."/>
            <person name="Yang F."/>
            <person name="Zhang X."/>
            <person name="Zhang J."/>
            <person name="Yang G."/>
            <person name="Wu H."/>
            <person name="Qu D."/>
            <person name="Dong J."/>
            <person name="Sun L."/>
            <person name="Xue Y."/>
            <person name="Zhao A."/>
            <person name="Gao Y."/>
            <person name="Zhu J."/>
            <person name="Kan B."/>
            <person name="Ding K."/>
            <person name="Chen S."/>
            <person name="Cheng H."/>
            <person name="Yao Z."/>
            <person name="He B."/>
            <person name="Chen R."/>
            <person name="Ma D."/>
            <person name="Qiang B."/>
            <person name="Wen Y."/>
            <person name="Hou Y."/>
            <person name="Yu J."/>
        </authorList>
    </citation>
    <scope>NUCLEOTIDE SEQUENCE [LARGE SCALE GENOMIC DNA]</scope>
    <source>
        <strain>301 / Serotype 2a</strain>
    </source>
</reference>
<reference key="2">
    <citation type="journal article" date="2003" name="Infect. Immun.">
        <title>Complete genome sequence and comparative genomics of Shigella flexneri serotype 2a strain 2457T.</title>
        <authorList>
            <person name="Wei J."/>
            <person name="Goldberg M.B."/>
            <person name="Burland V."/>
            <person name="Venkatesan M.M."/>
            <person name="Deng W."/>
            <person name="Fournier G."/>
            <person name="Mayhew G.F."/>
            <person name="Plunkett G. III"/>
            <person name="Rose D.J."/>
            <person name="Darling A."/>
            <person name="Mau B."/>
            <person name="Perna N.T."/>
            <person name="Payne S.M."/>
            <person name="Runyen-Janecky L.J."/>
            <person name="Zhou S."/>
            <person name="Schwartz D.C."/>
            <person name="Blattner F.R."/>
        </authorList>
    </citation>
    <scope>NUCLEOTIDE SEQUENCE [LARGE SCALE GENOMIC DNA]</scope>
    <source>
        <strain>ATCC 700930 / 2457T / Serotype 2a</strain>
    </source>
</reference>
<sequence length="62" mass="7266">MSTQLDPTQLAIEFLRRDQSNLSPAQYLKRLKQLELEFADLLTLSSAELKEEIYFAWRLGVH</sequence>
<evidence type="ECO:0000305" key="1"/>
<organism>
    <name type="scientific">Shigella flexneri</name>
    <dbReference type="NCBI Taxonomy" id="623"/>
    <lineage>
        <taxon>Bacteria</taxon>
        <taxon>Pseudomonadati</taxon>
        <taxon>Pseudomonadota</taxon>
        <taxon>Gammaproteobacteria</taxon>
        <taxon>Enterobacterales</taxon>
        <taxon>Enterobacteriaceae</taxon>
        <taxon>Shigella</taxon>
    </lineage>
</organism>
<dbReference type="EMBL" id="AE005674">
    <property type="protein sequence ID" value="AAN43291.1"/>
    <property type="status" value="ALT_INIT"/>
    <property type="molecule type" value="Genomic_DNA"/>
</dbReference>
<dbReference type="EMBL" id="AE014073">
    <property type="protein sequence ID" value="AAP17179.1"/>
    <property type="status" value="ALT_INIT"/>
    <property type="molecule type" value="Genomic_DNA"/>
</dbReference>
<dbReference type="RefSeq" id="NP_707584.1">
    <property type="nucleotide sequence ID" value="NC_004337.2"/>
</dbReference>
<dbReference type="RefSeq" id="WP_001296104.1">
    <property type="nucleotide sequence ID" value="NZ_WPGW01000073.1"/>
</dbReference>
<dbReference type="SMR" id="P64478"/>
<dbReference type="STRING" id="198214.SF1715"/>
<dbReference type="PaxDb" id="198214-SF1715"/>
<dbReference type="GeneID" id="1024912"/>
<dbReference type="KEGG" id="sfl:SF1715"/>
<dbReference type="KEGG" id="sfx:S1847"/>
<dbReference type="PATRIC" id="fig|198214.7.peg.2029"/>
<dbReference type="HOGENOM" id="CLU_179884_0_0_6"/>
<dbReference type="Proteomes" id="UP000001006">
    <property type="component" value="Chromosome"/>
</dbReference>
<dbReference type="Proteomes" id="UP000002673">
    <property type="component" value="Chromosome"/>
</dbReference>
<dbReference type="InterPro" id="IPR031830">
    <property type="entry name" value="YdiH"/>
</dbReference>
<dbReference type="Pfam" id="PF15930">
    <property type="entry name" value="YdiH"/>
    <property type="match status" value="1"/>
</dbReference>
<accession>P64478</accession>
<accession>P76195</accession>